<gene>
    <name evidence="11" type="primary">PRK5</name>
    <name evidence="10" type="synonym">PRKB</name>
    <name evidence="14" type="ordered locus">At1g50610</name>
    <name evidence="15" type="ORF">F11F12.7</name>
    <name evidence="16" type="ORF">F17J6.13</name>
</gene>
<reference key="1">
    <citation type="journal article" date="2000" name="Nature">
        <title>Sequence and analysis of chromosome 1 of the plant Arabidopsis thaliana.</title>
        <authorList>
            <person name="Theologis A."/>
            <person name="Ecker J.R."/>
            <person name="Palm C.J."/>
            <person name="Federspiel N.A."/>
            <person name="Kaul S."/>
            <person name="White O."/>
            <person name="Alonso J."/>
            <person name="Altafi H."/>
            <person name="Araujo R."/>
            <person name="Bowman C.L."/>
            <person name="Brooks S.Y."/>
            <person name="Buehler E."/>
            <person name="Chan A."/>
            <person name="Chao Q."/>
            <person name="Chen H."/>
            <person name="Cheuk R.F."/>
            <person name="Chin C.W."/>
            <person name="Chung M.K."/>
            <person name="Conn L."/>
            <person name="Conway A.B."/>
            <person name="Conway A.R."/>
            <person name="Creasy T.H."/>
            <person name="Dewar K."/>
            <person name="Dunn P."/>
            <person name="Etgu P."/>
            <person name="Feldblyum T.V."/>
            <person name="Feng J.-D."/>
            <person name="Fong B."/>
            <person name="Fujii C.Y."/>
            <person name="Gill J.E."/>
            <person name="Goldsmith A.D."/>
            <person name="Haas B."/>
            <person name="Hansen N.F."/>
            <person name="Hughes B."/>
            <person name="Huizar L."/>
            <person name="Hunter J.L."/>
            <person name="Jenkins J."/>
            <person name="Johnson-Hopson C."/>
            <person name="Khan S."/>
            <person name="Khaykin E."/>
            <person name="Kim C.J."/>
            <person name="Koo H.L."/>
            <person name="Kremenetskaia I."/>
            <person name="Kurtz D.B."/>
            <person name="Kwan A."/>
            <person name="Lam B."/>
            <person name="Langin-Hooper S."/>
            <person name="Lee A."/>
            <person name="Lee J.M."/>
            <person name="Lenz C.A."/>
            <person name="Li J.H."/>
            <person name="Li Y.-P."/>
            <person name="Lin X."/>
            <person name="Liu S.X."/>
            <person name="Liu Z.A."/>
            <person name="Luros J.S."/>
            <person name="Maiti R."/>
            <person name="Marziali A."/>
            <person name="Militscher J."/>
            <person name="Miranda M."/>
            <person name="Nguyen M."/>
            <person name="Nierman W.C."/>
            <person name="Osborne B.I."/>
            <person name="Pai G."/>
            <person name="Peterson J."/>
            <person name="Pham P.K."/>
            <person name="Rizzo M."/>
            <person name="Rooney T."/>
            <person name="Rowley D."/>
            <person name="Sakano H."/>
            <person name="Salzberg S.L."/>
            <person name="Schwartz J.R."/>
            <person name="Shinn P."/>
            <person name="Southwick A.M."/>
            <person name="Sun H."/>
            <person name="Tallon L.J."/>
            <person name="Tambunga G."/>
            <person name="Toriumi M.J."/>
            <person name="Town C.D."/>
            <person name="Utterback T."/>
            <person name="Van Aken S."/>
            <person name="Vaysberg M."/>
            <person name="Vysotskaia V.S."/>
            <person name="Walker M."/>
            <person name="Wu D."/>
            <person name="Yu G."/>
            <person name="Fraser C.M."/>
            <person name="Venter J.C."/>
            <person name="Davis R.W."/>
        </authorList>
    </citation>
    <scope>NUCLEOTIDE SEQUENCE [LARGE SCALE GENOMIC DNA]</scope>
    <source>
        <strain>cv. Columbia</strain>
    </source>
</reference>
<reference key="2">
    <citation type="journal article" date="2017" name="Plant J.">
        <title>Araport11: a complete reannotation of the Arabidopsis thaliana reference genome.</title>
        <authorList>
            <person name="Cheng C.Y."/>
            <person name="Krishnakumar V."/>
            <person name="Chan A.P."/>
            <person name="Thibaud-Nissen F."/>
            <person name="Schobel S."/>
            <person name="Town C.D."/>
        </authorList>
    </citation>
    <scope>GENOME REANNOTATION</scope>
    <source>
        <strain>cv. Columbia</strain>
    </source>
</reference>
<reference key="3">
    <citation type="journal article" date="2002" name="Science">
        <title>Functional annotation of a full-length Arabidopsis cDNA collection.</title>
        <authorList>
            <person name="Seki M."/>
            <person name="Narusaka M."/>
            <person name="Kamiya A."/>
            <person name="Ishida J."/>
            <person name="Satou M."/>
            <person name="Sakurai T."/>
            <person name="Nakajima M."/>
            <person name="Enju A."/>
            <person name="Akiyama K."/>
            <person name="Oono Y."/>
            <person name="Muramatsu M."/>
            <person name="Hayashizaki Y."/>
            <person name="Kawai J."/>
            <person name="Carninci P."/>
            <person name="Itoh M."/>
            <person name="Ishii Y."/>
            <person name="Arakawa T."/>
            <person name="Shibata K."/>
            <person name="Shinagawa A."/>
            <person name="Shinozaki K."/>
        </authorList>
    </citation>
    <scope>NUCLEOTIDE SEQUENCE [LARGE SCALE MRNA]</scope>
    <source>
        <strain>cv. Columbia</strain>
    </source>
</reference>
<reference key="4">
    <citation type="journal article" date="2003" name="Science">
        <title>Empirical analysis of transcriptional activity in the Arabidopsis genome.</title>
        <authorList>
            <person name="Yamada K."/>
            <person name="Lim J."/>
            <person name="Dale J.M."/>
            <person name="Chen H."/>
            <person name="Shinn P."/>
            <person name="Palm C.J."/>
            <person name="Southwick A.M."/>
            <person name="Wu H.C."/>
            <person name="Kim C.J."/>
            <person name="Nguyen M."/>
            <person name="Pham P.K."/>
            <person name="Cheuk R.F."/>
            <person name="Karlin-Newmann G."/>
            <person name="Liu S.X."/>
            <person name="Lam B."/>
            <person name="Sakano H."/>
            <person name="Wu T."/>
            <person name="Yu G."/>
            <person name="Miranda M."/>
            <person name="Quach H.L."/>
            <person name="Tripp M."/>
            <person name="Chang C.H."/>
            <person name="Lee J.M."/>
            <person name="Toriumi M.J."/>
            <person name="Chan M.M."/>
            <person name="Tang C.C."/>
            <person name="Onodera C.S."/>
            <person name="Deng J.M."/>
            <person name="Akiyama K."/>
            <person name="Ansari Y."/>
            <person name="Arakawa T."/>
            <person name="Banh J."/>
            <person name="Banno F."/>
            <person name="Bowser L."/>
            <person name="Brooks S.Y."/>
            <person name="Carninci P."/>
            <person name="Chao Q."/>
            <person name="Choy N."/>
            <person name="Enju A."/>
            <person name="Goldsmith A.D."/>
            <person name="Gurjal M."/>
            <person name="Hansen N.F."/>
            <person name="Hayashizaki Y."/>
            <person name="Johnson-Hopson C."/>
            <person name="Hsuan V.W."/>
            <person name="Iida K."/>
            <person name="Karnes M."/>
            <person name="Khan S."/>
            <person name="Koesema E."/>
            <person name="Ishida J."/>
            <person name="Jiang P.X."/>
            <person name="Jones T."/>
            <person name="Kawai J."/>
            <person name="Kamiya A."/>
            <person name="Meyers C."/>
            <person name="Nakajima M."/>
            <person name="Narusaka M."/>
            <person name="Seki M."/>
            <person name="Sakurai T."/>
            <person name="Satou M."/>
            <person name="Tamse R."/>
            <person name="Vaysberg M."/>
            <person name="Wallender E.K."/>
            <person name="Wong C."/>
            <person name="Yamamura Y."/>
            <person name="Yuan S."/>
            <person name="Shinozaki K."/>
            <person name="Davis R.W."/>
            <person name="Theologis A."/>
            <person name="Ecker J.R."/>
        </authorList>
    </citation>
    <scope>NUCLEOTIDE SEQUENCE [LARGE SCALE MRNA]</scope>
    <source>
        <strain>cv. Columbia</strain>
    </source>
</reference>
<reference key="5">
    <citation type="journal article" date="2010" name="BMC Genomics">
        <title>Genome-wide cloning and sequence analysis of leucine-rich repeat receptor-like protein kinase genes in Arabidopsis thaliana.</title>
        <authorList>
            <person name="Gou X."/>
            <person name="He K."/>
            <person name="Yang H."/>
            <person name="Yuan T."/>
            <person name="Lin H."/>
            <person name="Clouse S.D."/>
            <person name="Li J."/>
        </authorList>
    </citation>
    <scope>NUCLEOTIDE SEQUENCE [LARGE SCALE MRNA]</scope>
    <source>
        <strain>cv. Columbia</strain>
    </source>
</reference>
<reference key="6">
    <citation type="journal article" date="2002" name="Plant Mol. Biol.">
        <title>New pollen-specific receptor kinases identified in tomato, maize and Arabidopsis: the tomato kinases show overlapping but distinct localization patterns on pollen tubes.</title>
        <authorList>
            <person name="Kim H.U."/>
            <person name="Cotter R."/>
            <person name="Johnson S."/>
            <person name="Senda M."/>
            <person name="Dodds P."/>
            <person name="Kulikauska R."/>
            <person name="Tang W."/>
            <person name="Ezcura I."/>
            <person name="Herzmark P."/>
            <person name="McCormick S."/>
        </authorList>
    </citation>
    <scope>TISSUE SPECIFICITY</scope>
    <scope>GENE FAMILY</scope>
    <scope>NOMENCLATURE</scope>
</reference>
<reference key="7">
    <citation type="journal article" date="2013" name="Mol. Plant">
        <title>AtPRK2 Promotes ROP1 activation via RopGEFs in the control of polarized pollen tube growth.</title>
        <authorList>
            <person name="Chang F."/>
            <person name="Gu Y."/>
            <person name="Ma H."/>
            <person name="Yang Z."/>
        </authorList>
    </citation>
    <scope>FUNCTION</scope>
    <scope>DISRUPTION PHENOTYPE</scope>
    <scope>GENE FAMILY</scope>
    <scope>NOMENCLATURE</scope>
</reference>
<reference key="8">
    <citation type="journal article" date="2015" name="EMBO J.">
        <title>GRIM REAPER peptide binds to receptor kinase PRK5 to trigger cell death in Arabidopsis.</title>
        <authorList>
            <person name="Wrzaczek M."/>
            <person name="Vainonen J.P."/>
            <person name="Stael S."/>
            <person name="Tsiatsiani L."/>
            <person name="Help-Rinta-Rahko H."/>
            <person name="Gauthier A."/>
            <person name="Kaufholdt D."/>
            <person name="Bollhoener B."/>
            <person name="Lamminmaeki A."/>
            <person name="Staes A."/>
            <person name="Gevaert K."/>
            <person name="Tuominen H."/>
            <person name="Van Breusegem F."/>
            <person name="Helariutta Y."/>
            <person name="Kangasjaervi J."/>
        </authorList>
    </citation>
    <scope>FUNCTION</scope>
    <scope>TISSUE SPECIFICITY</scope>
    <scope>INDUCTION BY STRESSES</scope>
    <scope>INTERACTION WITH GRI</scope>
    <scope>SUBCELLULAR LOCATION</scope>
    <scope>3D-STRUCTURE MODELING</scope>
    <scope>MUTAGENESIS OF HIS-500 AND ALA-520</scope>
</reference>
<name>PRK5_ARATH</name>
<protein>
    <recommendedName>
        <fullName evidence="11">Pollen receptor-like kinase 5</fullName>
        <shortName evidence="11">AtPRK5</shortName>
        <ecNumber evidence="12">2.7.11.1</ecNumber>
    </recommendedName>
</protein>
<keyword id="KW-0067">ATP-binding</keyword>
<keyword id="KW-1003">Cell membrane</keyword>
<keyword id="KW-0325">Glycoprotein</keyword>
<keyword id="KW-0418">Kinase</keyword>
<keyword id="KW-0433">Leucine-rich repeat</keyword>
<keyword id="KW-0472">Membrane</keyword>
<keyword id="KW-0547">Nucleotide-binding</keyword>
<keyword id="KW-0597">Phosphoprotein</keyword>
<keyword id="KW-0675">Receptor</keyword>
<keyword id="KW-1185">Reference proteome</keyword>
<keyword id="KW-0677">Repeat</keyword>
<keyword id="KW-0723">Serine/threonine-protein kinase</keyword>
<keyword id="KW-0732">Signal</keyword>
<keyword id="KW-0808">Transferase</keyword>
<keyword id="KW-0812">Transmembrane</keyword>
<keyword id="KW-1133">Transmembrane helix</keyword>
<dbReference type="EC" id="2.7.11.1" evidence="12"/>
<dbReference type="EMBL" id="AC012561">
    <property type="protein sequence ID" value="AAF87874.1"/>
    <property type="molecule type" value="Genomic_DNA"/>
</dbReference>
<dbReference type="EMBL" id="AC079279">
    <property type="protein sequence ID" value="AAG51193.1"/>
    <property type="molecule type" value="Genomic_DNA"/>
</dbReference>
<dbReference type="EMBL" id="CP002684">
    <property type="protein sequence ID" value="AEE32570.1"/>
    <property type="molecule type" value="Genomic_DNA"/>
</dbReference>
<dbReference type="EMBL" id="AK117856">
    <property type="protein sequence ID" value="BAC42497.1"/>
    <property type="molecule type" value="mRNA"/>
</dbReference>
<dbReference type="EMBL" id="BT005953">
    <property type="protein sequence ID" value="AAO64888.1"/>
    <property type="molecule type" value="mRNA"/>
</dbReference>
<dbReference type="EMBL" id="FJ708649">
    <property type="protein sequence ID" value="ACN59245.1"/>
    <property type="molecule type" value="mRNA"/>
</dbReference>
<dbReference type="PIR" id="F96542">
    <property type="entry name" value="F96542"/>
</dbReference>
<dbReference type="RefSeq" id="NP_175476.2">
    <property type="nucleotide sequence ID" value="NM_103943.3"/>
</dbReference>
<dbReference type="SMR" id="Q9LPT1"/>
<dbReference type="BioGRID" id="26708">
    <property type="interactions" value="64"/>
</dbReference>
<dbReference type="IntAct" id="Q9LPT1">
    <property type="interactions" value="66"/>
</dbReference>
<dbReference type="STRING" id="3702.Q9LPT1"/>
<dbReference type="GlyCosmos" id="Q9LPT1">
    <property type="glycosylation" value="1 site, No reported glycans"/>
</dbReference>
<dbReference type="GlyGen" id="Q9LPT1">
    <property type="glycosylation" value="1 site"/>
</dbReference>
<dbReference type="PaxDb" id="3702-AT1G50610.1"/>
<dbReference type="ProteomicsDB" id="226167"/>
<dbReference type="EnsemblPlants" id="AT1G50610.1">
    <property type="protein sequence ID" value="AT1G50610.1"/>
    <property type="gene ID" value="AT1G50610"/>
</dbReference>
<dbReference type="GeneID" id="841483"/>
<dbReference type="Gramene" id="AT1G50610.1">
    <property type="protein sequence ID" value="AT1G50610.1"/>
    <property type="gene ID" value="AT1G50610"/>
</dbReference>
<dbReference type="KEGG" id="ath:AT1G50610"/>
<dbReference type="Araport" id="AT1G50610"/>
<dbReference type="TAIR" id="AT1G50610">
    <property type="gene designation" value="PRK5"/>
</dbReference>
<dbReference type="eggNOG" id="ENOG502QUJJ">
    <property type="taxonomic scope" value="Eukaryota"/>
</dbReference>
<dbReference type="HOGENOM" id="CLU_000288_92_6_1"/>
<dbReference type="InParanoid" id="Q9LPT1"/>
<dbReference type="OMA" id="DDFGSMD"/>
<dbReference type="OrthoDB" id="418615at2759"/>
<dbReference type="PhylomeDB" id="Q9LPT1"/>
<dbReference type="PRO" id="PR:Q9LPT1"/>
<dbReference type="Proteomes" id="UP000006548">
    <property type="component" value="Chromosome 1"/>
</dbReference>
<dbReference type="ExpressionAtlas" id="Q9LPT1">
    <property type="expression patterns" value="baseline and differential"/>
</dbReference>
<dbReference type="GO" id="GO:0005886">
    <property type="term" value="C:plasma membrane"/>
    <property type="evidence" value="ECO:0007669"/>
    <property type="project" value="UniProtKB-SubCell"/>
</dbReference>
<dbReference type="GO" id="GO:0005524">
    <property type="term" value="F:ATP binding"/>
    <property type="evidence" value="ECO:0007669"/>
    <property type="project" value="UniProtKB-KW"/>
</dbReference>
<dbReference type="GO" id="GO:0106310">
    <property type="term" value="F:protein serine kinase activity"/>
    <property type="evidence" value="ECO:0007669"/>
    <property type="project" value="RHEA"/>
</dbReference>
<dbReference type="GO" id="GO:0004674">
    <property type="term" value="F:protein serine/threonine kinase activity"/>
    <property type="evidence" value="ECO:0007669"/>
    <property type="project" value="UniProtKB-KW"/>
</dbReference>
<dbReference type="GO" id="GO:0080092">
    <property type="term" value="P:regulation of pollen tube growth"/>
    <property type="evidence" value="ECO:0000315"/>
    <property type="project" value="TAIR"/>
</dbReference>
<dbReference type="FunFam" id="1.10.510.10:FF:000480">
    <property type="entry name" value="Pollen receptor-like kinase 1"/>
    <property type="match status" value="1"/>
</dbReference>
<dbReference type="FunFam" id="3.30.200.20:FF:000307">
    <property type="entry name" value="pollen receptor-like kinase 1"/>
    <property type="match status" value="1"/>
</dbReference>
<dbReference type="FunFam" id="3.80.10.10:FF:001609">
    <property type="entry name" value="Pollen receptor-like kinase 4"/>
    <property type="match status" value="1"/>
</dbReference>
<dbReference type="Gene3D" id="3.30.200.20">
    <property type="entry name" value="Phosphorylase Kinase, domain 1"/>
    <property type="match status" value="1"/>
</dbReference>
<dbReference type="Gene3D" id="3.80.10.10">
    <property type="entry name" value="Ribonuclease Inhibitor"/>
    <property type="match status" value="1"/>
</dbReference>
<dbReference type="Gene3D" id="1.10.510.10">
    <property type="entry name" value="Transferase(Phosphotransferase) domain 1"/>
    <property type="match status" value="1"/>
</dbReference>
<dbReference type="InterPro" id="IPR011009">
    <property type="entry name" value="Kinase-like_dom_sf"/>
</dbReference>
<dbReference type="InterPro" id="IPR001611">
    <property type="entry name" value="Leu-rich_rpt"/>
</dbReference>
<dbReference type="InterPro" id="IPR032675">
    <property type="entry name" value="LRR_dom_sf"/>
</dbReference>
<dbReference type="InterPro" id="IPR013210">
    <property type="entry name" value="LRR_N_plant-typ"/>
</dbReference>
<dbReference type="InterPro" id="IPR046959">
    <property type="entry name" value="PRK1-6/SRF4-like"/>
</dbReference>
<dbReference type="InterPro" id="IPR000719">
    <property type="entry name" value="Prot_kinase_dom"/>
</dbReference>
<dbReference type="InterPro" id="IPR001245">
    <property type="entry name" value="Ser-Thr/Tyr_kinase_cat_dom"/>
</dbReference>
<dbReference type="PANTHER" id="PTHR48007">
    <property type="entry name" value="LEUCINE-RICH REPEAT RECEPTOR-LIKE PROTEIN KINASE PXC1"/>
    <property type="match status" value="1"/>
</dbReference>
<dbReference type="PANTHER" id="PTHR48007:SF19">
    <property type="entry name" value="POLLEN RECEPTOR-LIKE KINASE 5"/>
    <property type="match status" value="1"/>
</dbReference>
<dbReference type="Pfam" id="PF13855">
    <property type="entry name" value="LRR_8"/>
    <property type="match status" value="1"/>
</dbReference>
<dbReference type="Pfam" id="PF08263">
    <property type="entry name" value="LRRNT_2"/>
    <property type="match status" value="1"/>
</dbReference>
<dbReference type="Pfam" id="PF07714">
    <property type="entry name" value="PK_Tyr_Ser-Thr"/>
    <property type="match status" value="1"/>
</dbReference>
<dbReference type="SUPFAM" id="SSF52058">
    <property type="entry name" value="L domain-like"/>
    <property type="match status" value="1"/>
</dbReference>
<dbReference type="SUPFAM" id="SSF56112">
    <property type="entry name" value="Protein kinase-like (PK-like)"/>
    <property type="match status" value="1"/>
</dbReference>
<dbReference type="PROSITE" id="PS51450">
    <property type="entry name" value="LRR"/>
    <property type="match status" value="1"/>
</dbReference>
<dbReference type="PROSITE" id="PS50011">
    <property type="entry name" value="PROTEIN_KINASE_DOM"/>
    <property type="match status" value="1"/>
</dbReference>
<accession>Q9LPT1</accession>
<proteinExistence type="evidence at protein level"/>
<organism>
    <name type="scientific">Arabidopsis thaliana</name>
    <name type="common">Mouse-ear cress</name>
    <dbReference type="NCBI Taxonomy" id="3702"/>
    <lineage>
        <taxon>Eukaryota</taxon>
        <taxon>Viridiplantae</taxon>
        <taxon>Streptophyta</taxon>
        <taxon>Embryophyta</taxon>
        <taxon>Tracheophyta</taxon>
        <taxon>Spermatophyta</taxon>
        <taxon>Magnoliopsida</taxon>
        <taxon>eudicotyledons</taxon>
        <taxon>Gunneridae</taxon>
        <taxon>Pentapetalae</taxon>
        <taxon>rosids</taxon>
        <taxon>malvids</taxon>
        <taxon>Brassicales</taxon>
        <taxon>Brassicaceae</taxon>
        <taxon>Camelineae</taxon>
        <taxon>Arabidopsis</taxon>
    </lineage>
</organism>
<evidence type="ECO:0000250" key="1">
    <source>
        <dbReference type="UniProtKB" id="Q94AG2"/>
    </source>
</evidence>
<evidence type="ECO:0000250" key="2">
    <source>
        <dbReference type="UniProtKB" id="Q94F62"/>
    </source>
</evidence>
<evidence type="ECO:0000250" key="3">
    <source>
        <dbReference type="UniProtKB" id="Q9LSI9"/>
    </source>
</evidence>
<evidence type="ECO:0000255" key="4"/>
<evidence type="ECO:0000255" key="5">
    <source>
        <dbReference type="PROSITE-ProRule" id="PRU00159"/>
    </source>
</evidence>
<evidence type="ECO:0000256" key="6">
    <source>
        <dbReference type="SAM" id="MobiDB-lite"/>
    </source>
</evidence>
<evidence type="ECO:0000269" key="7">
    <source>
    </source>
</evidence>
<evidence type="ECO:0000269" key="8">
    <source>
    </source>
</evidence>
<evidence type="ECO:0000269" key="9">
    <source>
    </source>
</evidence>
<evidence type="ECO:0000303" key="10">
    <source>
    </source>
</evidence>
<evidence type="ECO:0000303" key="11">
    <source>
    </source>
</evidence>
<evidence type="ECO:0000305" key="12"/>
<evidence type="ECO:0000305" key="13">
    <source>
    </source>
</evidence>
<evidence type="ECO:0000312" key="14">
    <source>
        <dbReference type="Araport" id="AT1G50610"/>
    </source>
</evidence>
<evidence type="ECO:0000312" key="15">
    <source>
        <dbReference type="EMBL" id="AAF87874.1"/>
    </source>
</evidence>
<evidence type="ECO:0000312" key="16">
    <source>
        <dbReference type="EMBL" id="AAG51193.1"/>
    </source>
</evidence>
<comment type="function">
    <text evidence="8 9">Receptor-like kinase involved in the control of pollen germination and pollen tube polar growth (PubMed:23024212). The extracellular domain serves as a sensor for peptides derived from GRI (PubMed:25398910). May act as a downstream element for ROS-dependent cell death induced by GRI (PubMed:25398910).</text>
</comment>
<comment type="catalytic activity">
    <reaction evidence="12">
        <text>L-seryl-[protein] + ATP = O-phospho-L-seryl-[protein] + ADP + H(+)</text>
        <dbReference type="Rhea" id="RHEA:17989"/>
        <dbReference type="Rhea" id="RHEA-COMP:9863"/>
        <dbReference type="Rhea" id="RHEA-COMP:11604"/>
        <dbReference type="ChEBI" id="CHEBI:15378"/>
        <dbReference type="ChEBI" id="CHEBI:29999"/>
        <dbReference type="ChEBI" id="CHEBI:30616"/>
        <dbReference type="ChEBI" id="CHEBI:83421"/>
        <dbReference type="ChEBI" id="CHEBI:456216"/>
        <dbReference type="EC" id="2.7.11.1"/>
    </reaction>
</comment>
<comment type="catalytic activity">
    <reaction evidence="12">
        <text>L-threonyl-[protein] + ATP = O-phospho-L-threonyl-[protein] + ADP + H(+)</text>
        <dbReference type="Rhea" id="RHEA:46608"/>
        <dbReference type="Rhea" id="RHEA-COMP:11060"/>
        <dbReference type="Rhea" id="RHEA-COMP:11605"/>
        <dbReference type="ChEBI" id="CHEBI:15378"/>
        <dbReference type="ChEBI" id="CHEBI:30013"/>
        <dbReference type="ChEBI" id="CHEBI:30616"/>
        <dbReference type="ChEBI" id="CHEBI:61977"/>
        <dbReference type="ChEBI" id="CHEBI:456216"/>
        <dbReference type="EC" id="2.7.11.1"/>
    </reaction>
</comment>
<comment type="subunit">
    <text evidence="9">Interacts with the GRI peptide.</text>
</comment>
<comment type="interaction">
    <interactant intactId="EBI-16914400">
        <id>Q9LPT1</id>
    </interactant>
    <interactant intactId="EBI-20651541">
        <id>C0LGJ9</id>
        <label>At2g02780</label>
    </interactant>
    <organismsDiffer>false</organismsDiffer>
    <experiments>2</experiments>
</comment>
<comment type="interaction">
    <interactant intactId="EBI-16914400">
        <id>Q9LPT1</id>
    </interactant>
    <interactant intactId="EBI-20653342">
        <id>A0A178UFM8</id>
        <label>At5g51560</label>
    </interactant>
    <organismsDiffer>false</organismsDiffer>
    <experiments>2</experiments>
</comment>
<comment type="interaction">
    <interactant intactId="EBI-16914400">
        <id>Q9LPT1</id>
    </interactant>
    <interactant intactId="EBI-16946020">
        <id>O22138</id>
        <label>LRR-RLK</label>
    </interactant>
    <organismsDiffer>false</organismsDiffer>
    <experiments>2</experiments>
</comment>
<comment type="interaction">
    <interactant intactId="EBI-16914400">
        <id>Q9LPT1</id>
    </interactant>
    <interactant intactId="EBI-20651307">
        <id>F4I2N7-2</id>
        <label>RLK7</label>
    </interactant>
    <organismsDiffer>false</organismsDiffer>
    <experiments>2</experiments>
</comment>
<comment type="subcellular location">
    <subcellularLocation>
        <location evidence="9">Cell membrane</location>
        <topology evidence="12">Single-pass type I membrane protein</topology>
    </subcellularLocation>
</comment>
<comment type="tissue specificity">
    <text evidence="7 9">Expressed in pollen and/or in flowers (PubMed:12139002). Detected at low levels in leaves (PubMed:25398910).</text>
</comment>
<comment type="induction">
    <text evidence="13">Up-regulated by biotic and abiotic stresses.</text>
</comment>
<comment type="domain">
    <text evidence="5">The protein kinase domain may be catalytically impaired due to the lack of the conserved Asp active site at position 500, which is replaced by a His residue.</text>
</comment>
<comment type="disruption phenotype">
    <text evidence="8">No effect on pollen germination and growth. Prk2 and prk5 double mutant has no effect on pollen germination and growth. Prk1, prk2 and prk5 triple mutant shows reduced pollen tube elongation.</text>
</comment>
<comment type="similarity">
    <text evidence="5">Belongs to the protein kinase superfamily. Ser/Thr protein kinase family.</text>
</comment>
<feature type="signal peptide" evidence="4">
    <location>
        <begin position="1"/>
        <end position="39"/>
    </location>
</feature>
<feature type="chain" id="PRO_0000389465" description="Pollen receptor-like kinase 5">
    <location>
        <begin position="40"/>
        <end position="686"/>
    </location>
</feature>
<feature type="topological domain" description="Extracellular" evidence="4">
    <location>
        <begin position="40"/>
        <end position="283"/>
    </location>
</feature>
<feature type="transmembrane region" description="Helical" evidence="4">
    <location>
        <begin position="284"/>
        <end position="304"/>
    </location>
</feature>
<feature type="topological domain" description="Cytoplasmic" evidence="4">
    <location>
        <begin position="305"/>
        <end position="686"/>
    </location>
</feature>
<feature type="repeat" description="LRR 1" evidence="4">
    <location>
        <begin position="112"/>
        <end position="135"/>
    </location>
</feature>
<feature type="repeat" description="LRR 2" evidence="4">
    <location>
        <begin position="136"/>
        <end position="159"/>
    </location>
</feature>
<feature type="repeat" description="LRR 3" evidence="4">
    <location>
        <begin position="161"/>
        <end position="184"/>
    </location>
</feature>
<feature type="repeat" description="LRR 4" evidence="4">
    <location>
        <begin position="185"/>
        <end position="208"/>
    </location>
</feature>
<feature type="repeat" description="LRR 5" evidence="4">
    <location>
        <begin position="210"/>
        <end position="230"/>
    </location>
</feature>
<feature type="domain" description="Protein kinase" evidence="5">
    <location>
        <begin position="375"/>
        <end position="648"/>
    </location>
</feature>
<feature type="region of interest" description="Disordered" evidence="6">
    <location>
        <begin position="328"/>
        <end position="355"/>
    </location>
</feature>
<feature type="compositionally biased region" description="Polar residues" evidence="6">
    <location>
        <begin position="328"/>
        <end position="339"/>
    </location>
</feature>
<feature type="binding site" evidence="5">
    <location>
        <begin position="381"/>
        <end position="389"/>
    </location>
    <ligand>
        <name>ATP</name>
        <dbReference type="ChEBI" id="CHEBI:30616"/>
    </ligand>
</feature>
<feature type="binding site" evidence="5">
    <location>
        <position position="403"/>
    </location>
    <ligand>
        <name>ATP</name>
        <dbReference type="ChEBI" id="CHEBI:30616"/>
    </ligand>
</feature>
<feature type="modified residue" description="Phosphoserine" evidence="2">
    <location>
        <position position="377"/>
    </location>
</feature>
<feature type="modified residue" description="Phosphoserine" evidence="1">
    <location>
        <position position="455"/>
    </location>
</feature>
<feature type="modified residue" description="Phosphoserine" evidence="3">
    <location>
        <position position="458"/>
    </location>
</feature>
<feature type="modified residue" description="Phosphothreonine" evidence="1">
    <location>
        <position position="472"/>
    </location>
</feature>
<feature type="modified residue" description="Phosphotyrosine" evidence="1">
    <location>
        <position position="542"/>
    </location>
</feature>
<feature type="modified residue" description="Phosphoserine" evidence="1">
    <location>
        <position position="545"/>
    </location>
</feature>
<feature type="glycosylation site" description="N-linked (GlcNAc...) asparagine" evidence="4">
    <location>
        <position position="60"/>
    </location>
</feature>
<feature type="mutagenesis site" description="Restored in-vitro kinase activity; when associated with G-520." evidence="9">
    <original>H</original>
    <variation>D</variation>
    <location>
        <position position="500"/>
    </location>
</feature>
<feature type="mutagenesis site" description="Restored in-vitro kinase activity; when associated with D-500." evidence="9">
    <original>A</original>
    <variation>G</variation>
    <location>
        <position position="520"/>
    </location>
</feature>
<sequence length="686" mass="76861">MRNWEDPFTLACNTALKKNLPSCIFIIIFISVLCPVAMSQVVVPDSDADCLLRFKDTLANGSEFRSWDPLSSPCQGNTANWFGVLCSNYVWGLQLEGMGLTGKLNLDPLVPMKNLRTISFMNNNFNGPMPQVKRFTSLKSLYLSNNRFSGEIPADAFLGMPLLKKILLANNAFRGTIPSSLASLPMLLELRLNGNQFQGQIPSFQQKDLKLASFENNDLDGPIPESLRNMDPGSFAGNKGLCDAPLSPCSSSSPGVPVVPVSPVDPKSTSPPTGKKAGSFYTLAIILIVIGIILVIIALVFCFVQSRRRNFLSAYPSSAGKERIESYNYHQSTNKNNKPAESVNHTRRGSMPDPGGRLLFVRDDIQRFDLQDLLRASAEVLGSGTFGASYKAAISSGQTLVVKRYKHMNNVGRDEFHEHMRRLGRLNHPNILPLVAYYYRREEKLLVTEFMPNSSLASHLHANNSAGLDWITRLKIIKGVAKGLSYLFDELPTLTIPHGHMKSSNIVLDDSFEPLLTDYALRPMMSSEHAHNFMTAYKSPEYRPSKGQIITKKTDVWCFGVLILEVLTGRFPENYLTQGYDSNMSLVTWVNDMVKEKKTGDVFDKEMKGKKNCKAEMINLLKIGLRCCEEEEERRMDMREVVEMVEMLREGESEDDFGSMDHRGTHNNVYSSMLLDDDDFGFSMNR</sequence>